<reference key="1">
    <citation type="journal article" date="1992" name="Microb. Pathog.">
        <title>Nucleotide sequences and characterization of haemolysin genes from Aeromonas hydrophila and Aeromonas sobria.</title>
        <authorList>
            <person name="Hirono I."/>
            <person name="Aoki T."/>
            <person name="Asao T."/>
            <person name="Kozaki S."/>
        </authorList>
    </citation>
    <scope>NUCLEOTIDE SEQUENCE [GENOMIC DNA]</scope>
    <scope>FUNCTION</scope>
    <scope>SUBCELLULAR LOCATION</scope>
    <source>
        <strain>28SA</strain>
    </source>
</reference>
<organism>
    <name type="scientific">Aeromonas hydrophila</name>
    <dbReference type="NCBI Taxonomy" id="644"/>
    <lineage>
        <taxon>Bacteria</taxon>
        <taxon>Pseudomonadati</taxon>
        <taxon>Pseudomonadota</taxon>
        <taxon>Gammaproteobacteria</taxon>
        <taxon>Aeromonadales</taxon>
        <taxon>Aeromonadaceae</taxon>
        <taxon>Aeromonas</taxon>
    </lineage>
</organism>
<protein>
    <recommendedName>
        <fullName>Aerolysin-3</fullName>
    </recommendedName>
    <alternativeName>
        <fullName>Hemolysin-3</fullName>
    </alternativeName>
</protein>
<accession>Q06305</accession>
<dbReference type="EMBL" id="X65044">
    <property type="protein sequence ID" value="CAA46180.1"/>
    <property type="molecule type" value="Genomic_DNA"/>
</dbReference>
<dbReference type="SMR" id="Q06305"/>
<dbReference type="GO" id="GO:0005576">
    <property type="term" value="C:extracellular region"/>
    <property type="evidence" value="ECO:0007669"/>
    <property type="project" value="UniProtKB-SubCell"/>
</dbReference>
<dbReference type="GO" id="GO:0020002">
    <property type="term" value="C:host cell plasma membrane"/>
    <property type="evidence" value="ECO:0007669"/>
    <property type="project" value="UniProtKB-SubCell"/>
</dbReference>
<dbReference type="GO" id="GO:0016020">
    <property type="term" value="C:membrane"/>
    <property type="evidence" value="ECO:0007669"/>
    <property type="project" value="UniProtKB-KW"/>
</dbReference>
<dbReference type="GO" id="GO:0090729">
    <property type="term" value="F:toxin activity"/>
    <property type="evidence" value="ECO:0007669"/>
    <property type="project" value="UniProtKB-KW"/>
</dbReference>
<dbReference type="GO" id="GO:0031640">
    <property type="term" value="P:killing of cells of another organism"/>
    <property type="evidence" value="ECO:0007669"/>
    <property type="project" value="UniProtKB-KW"/>
</dbReference>
<dbReference type="CDD" id="cd20218">
    <property type="entry name" value="PFM_aerolysin"/>
    <property type="match status" value="1"/>
</dbReference>
<dbReference type="Gene3D" id="3.10.40.10">
    <property type="entry name" value="Aerolysin/Pertussis toxin (APT), N-terminal domain"/>
    <property type="match status" value="1"/>
</dbReference>
<dbReference type="Gene3D" id="3.30.412.10">
    <property type="entry name" value="Proaerolysin, chain A, domain 2"/>
    <property type="match status" value="1"/>
</dbReference>
<dbReference type="Gene3D" id="2.170.15.10">
    <property type="entry name" value="Proaerolysin, chain A, domain 3"/>
    <property type="match status" value="1"/>
</dbReference>
<dbReference type="InterPro" id="IPR055267">
    <property type="entry name" value="Aerolysin-like_C"/>
</dbReference>
<dbReference type="InterPro" id="IPR005831">
    <property type="entry name" value="Aerolysin/haemolysin_CS"/>
</dbReference>
<dbReference type="InterPro" id="IPR005830">
    <property type="entry name" value="Aerolysn"/>
</dbReference>
<dbReference type="InterPro" id="IPR005138">
    <property type="entry name" value="APT_dom"/>
</dbReference>
<dbReference type="InterPro" id="IPR037015">
    <property type="entry name" value="APT_N_sf"/>
</dbReference>
<dbReference type="InterPro" id="IPR016187">
    <property type="entry name" value="CTDL_fold"/>
</dbReference>
<dbReference type="Pfam" id="PF01117">
    <property type="entry name" value="Aerolysin"/>
    <property type="match status" value="1"/>
</dbReference>
<dbReference type="Pfam" id="PF03440">
    <property type="entry name" value="APT"/>
    <property type="match status" value="1"/>
</dbReference>
<dbReference type="PRINTS" id="PR00754">
    <property type="entry name" value="AEROLYSIN"/>
</dbReference>
<dbReference type="SMART" id="SM00999">
    <property type="entry name" value="Aerolysin"/>
    <property type="match status" value="1"/>
</dbReference>
<dbReference type="SUPFAM" id="SSF56973">
    <property type="entry name" value="Aerolisin/ETX pore-forming domain"/>
    <property type="match status" value="1"/>
</dbReference>
<dbReference type="SUPFAM" id="SSF56436">
    <property type="entry name" value="C-type lectin-like"/>
    <property type="match status" value="1"/>
</dbReference>
<dbReference type="PROSITE" id="PS00274">
    <property type="entry name" value="AEROLYSIN"/>
    <property type="match status" value="1"/>
</dbReference>
<sequence>MKKLKITGLSLIISGLLMAQAQAAEPVYPDQLRLFSLGQEVCGDKYRPVNREEAQSVKSNIVGMMGQWQISGLANGWVIMGPGYNGEIKPGSASSTWCYPTNPATGEIPTLSALDIPDGDEVDVQWRLVHDSANFIKPTSYLAHYLGYAWVGGNHSQYVGEDMDVTRDGDGWVIRGNNDGGCDGYRCGDKTSIKVSNFAYNLDPDSFKHGDVTQSDRQLVKTVVGWAINDSDTPQSGYDVTLRYDTATNWSKTNTYGLSEKVTTKNKFKWPLVGETELSIEIAANQSWASQNGGSPTTSLSQSVRPTVPAHSKIPVKIELYKADISYPYEFKADVSYDLTLSGFLRWGGNAWYTHPDNRPNWNHTFVIGPYKDKASSIRYQWDKRYIPGEVKWWDWNWTIQQNGLPTMQNNLAKVLRPVRAGITGDFSAESQFAGNIEIGAPVPVAAASHSSRARNLSAGQGLRLEIPLDAQELSGLGFNNVSLSVTPAANQ</sequence>
<proteinExistence type="inferred from homology"/>
<evidence type="ECO:0000250" key="1"/>
<evidence type="ECO:0000255" key="2"/>
<evidence type="ECO:0000269" key="3">
    <source>
    </source>
</evidence>
<evidence type="ECO:0000305" key="4"/>
<name>AER3_AERHY</name>
<keyword id="KW-0204">Cytolysis</keyword>
<keyword id="KW-1015">Disulfide bond</keyword>
<keyword id="KW-0354">Hemolysis</keyword>
<keyword id="KW-1032">Host cell membrane</keyword>
<keyword id="KW-1043">Host membrane</keyword>
<keyword id="KW-0472">Membrane</keyword>
<keyword id="KW-0964">Secreted</keyword>
<keyword id="KW-0732">Signal</keyword>
<keyword id="KW-0800">Toxin</keyword>
<keyword id="KW-0812">Transmembrane</keyword>
<keyword id="KW-1134">Transmembrane beta strand</keyword>
<keyword id="KW-0843">Virulence</keyword>
<feature type="signal peptide" evidence="2">
    <location>
        <begin position="1"/>
        <end position="23"/>
    </location>
</feature>
<feature type="chain" id="PRO_0000035622" description="Aerolysin-3">
    <location>
        <begin position="24"/>
        <end position="445"/>
    </location>
</feature>
<feature type="propeptide" id="PRO_0000035623" evidence="2">
    <location>
        <begin position="446"/>
        <end position="492"/>
    </location>
</feature>
<feature type="region of interest" description="Interaction with host N-linked glycan" evidence="1">
    <location>
        <begin position="68"/>
        <end position="84"/>
    </location>
</feature>
<feature type="region of interest" description="Part of the transmembrane beta-barrel after proteolytic activation of the toxin and insertion into the host membrane" evidence="1">
    <location>
        <begin position="256"/>
        <end position="288"/>
    </location>
</feature>
<feature type="region of interest" description="Interaction with glycans from host GPI-anchor" evidence="1">
    <location>
        <begin position="346"/>
        <end position="355"/>
    </location>
</feature>
<feature type="site" description="Important for oligomerization" evidence="1">
    <location>
        <position position="155"/>
    </location>
</feature>
<feature type="site" description="Important for heptamerization" evidence="1">
    <location>
        <position position="374"/>
    </location>
</feature>
<feature type="site" description="Important for heptamerization" evidence="1">
    <location>
        <position position="390"/>
    </location>
</feature>
<feature type="disulfide bond" evidence="1">
    <location>
        <begin position="42"/>
        <end position="98"/>
    </location>
</feature>
<feature type="disulfide bond" evidence="1">
    <location>
        <begin position="182"/>
        <end position="187"/>
    </location>
</feature>
<comment type="function">
    <text evidence="3">Secreted, cytolytic toxin that forms pores in host membranes after proteolytic removal of a C-terminal propeptide, leading to destruction of the membrane permeability barrier and cell death. The pores are formed by transmembrane beta-strands and are approximately 3 nm in diameter.</text>
</comment>
<comment type="subunit">
    <text evidence="1">Homodimer in solution; homoheptamer in the host membrane. After binding to GPI-anchored proteins in target membranes and proteolytic removal of the C-terminal propeptide, the protein assembles into a heptameric pre-pore complex. A further conformation change leads to insertion into the host membrane (By similarity).</text>
</comment>
<comment type="subcellular location">
    <subcellularLocation>
        <location evidence="3">Secreted</location>
    </subcellularLocation>
    <subcellularLocation>
        <location evidence="3">Host cell membrane</location>
    </subcellularLocation>
    <text>Secreted as a soluble precursor.</text>
</comment>
<comment type="domain">
    <text evidence="1">The C-terminal propeptide is required for normal protein folding and secretion; it maintains the aerolysin precursor in its soluble form and prevents premature heptamerization and pore formation.</text>
</comment>
<comment type="PTM">
    <text evidence="1">Proteolytic cleavage and subsequent release of the propeptide trigger a major conformation change, leading to the formation of a heptameric pre-pore that then inserts into the host membrane.</text>
</comment>
<comment type="similarity">
    <text evidence="4">Belongs to the aerolysin family.</text>
</comment>
<gene>
    <name type="primary">ahh3</name>
</gene>